<reference key="1">
    <citation type="submission" date="2007-03" db="EMBL/GenBank/DDBJ databases">
        <title>Complete sequence of Shewanella loihica PV-4.</title>
        <authorList>
            <consortium name="US DOE Joint Genome Institute"/>
            <person name="Copeland A."/>
            <person name="Lucas S."/>
            <person name="Lapidus A."/>
            <person name="Barry K."/>
            <person name="Detter J.C."/>
            <person name="Glavina del Rio T."/>
            <person name="Hammon N."/>
            <person name="Israni S."/>
            <person name="Dalin E."/>
            <person name="Tice H."/>
            <person name="Pitluck S."/>
            <person name="Chain P."/>
            <person name="Malfatti S."/>
            <person name="Shin M."/>
            <person name="Vergez L."/>
            <person name="Schmutz J."/>
            <person name="Larimer F."/>
            <person name="Land M."/>
            <person name="Hauser L."/>
            <person name="Kyrpides N."/>
            <person name="Mikhailova N."/>
            <person name="Romine M.F."/>
            <person name="Serres G."/>
            <person name="Fredrickson J."/>
            <person name="Tiedje J."/>
            <person name="Richardson P."/>
        </authorList>
    </citation>
    <scope>NUCLEOTIDE SEQUENCE [LARGE SCALE GENOMIC DNA]</scope>
    <source>
        <strain>ATCC BAA-1088 / PV-4</strain>
    </source>
</reference>
<accession>A3QFF5</accession>
<comment type="function">
    <text evidence="1">Catalyzes the base-exchange of a guanine (G) residue with the queuine precursor 7-aminomethyl-7-deazaguanine (PreQ1) at position 34 (anticodon wobble position) in tRNAs with GU(N) anticodons (tRNA-Asp, -Asn, -His and -Tyr). Catalysis occurs through a double-displacement mechanism. The nucleophile active site attacks the C1' of nucleotide 34 to detach the guanine base from the RNA, forming a covalent enzyme-RNA intermediate. The proton acceptor active site deprotonates the incoming PreQ1, allowing a nucleophilic attack on the C1' of the ribose to form the product. After dissociation, two additional enzymatic reactions on the tRNA convert PreQ1 to queuine (Q), resulting in the hypermodified nucleoside queuosine (7-(((4,5-cis-dihydroxy-2-cyclopenten-1-yl)amino)methyl)-7-deazaguanosine).</text>
</comment>
<comment type="catalytic activity">
    <reaction evidence="1">
        <text>7-aminomethyl-7-carbaguanine + guanosine(34) in tRNA = 7-aminomethyl-7-carbaguanosine(34) in tRNA + guanine</text>
        <dbReference type="Rhea" id="RHEA:24104"/>
        <dbReference type="Rhea" id="RHEA-COMP:10341"/>
        <dbReference type="Rhea" id="RHEA-COMP:10342"/>
        <dbReference type="ChEBI" id="CHEBI:16235"/>
        <dbReference type="ChEBI" id="CHEBI:58703"/>
        <dbReference type="ChEBI" id="CHEBI:74269"/>
        <dbReference type="ChEBI" id="CHEBI:82833"/>
        <dbReference type="EC" id="2.4.2.29"/>
    </reaction>
</comment>
<comment type="cofactor">
    <cofactor evidence="1">
        <name>Zn(2+)</name>
        <dbReference type="ChEBI" id="CHEBI:29105"/>
    </cofactor>
    <text evidence="1">Binds 1 zinc ion per subunit.</text>
</comment>
<comment type="pathway">
    <text evidence="1">tRNA modification; tRNA-queuosine biosynthesis.</text>
</comment>
<comment type="subunit">
    <text evidence="1">Homodimer. Within each dimer, one monomer is responsible for RNA recognition and catalysis, while the other monomer binds to the replacement base PreQ1.</text>
</comment>
<comment type="similarity">
    <text evidence="1">Belongs to the queuine tRNA-ribosyltransferase family.</text>
</comment>
<protein>
    <recommendedName>
        <fullName evidence="1">Queuine tRNA-ribosyltransferase</fullName>
        <ecNumber evidence="1">2.4.2.29</ecNumber>
    </recommendedName>
    <alternativeName>
        <fullName evidence="1">Guanine insertion enzyme</fullName>
    </alternativeName>
    <alternativeName>
        <fullName evidence="1">tRNA-guanine transglycosylase</fullName>
    </alternativeName>
</protein>
<proteinExistence type="inferred from homology"/>
<organism>
    <name type="scientific">Shewanella loihica (strain ATCC BAA-1088 / PV-4)</name>
    <dbReference type="NCBI Taxonomy" id="323850"/>
    <lineage>
        <taxon>Bacteria</taxon>
        <taxon>Pseudomonadati</taxon>
        <taxon>Pseudomonadota</taxon>
        <taxon>Gammaproteobacteria</taxon>
        <taxon>Alteromonadales</taxon>
        <taxon>Shewanellaceae</taxon>
        <taxon>Shewanella</taxon>
    </lineage>
</organism>
<sequence>MKFELDTTDGRARRGRLVFERGTVETPAFMPVGTYGTVKGMTPEEVRATGADILLGNTFHLWLRPGEEIMRKHGDLHDFMNWQRPILTDSGGFQVFSLGDIRKITEEGVHFRSPINGEKIFMDAEKSMQIQYSLGSDVVMIFDECTPYPATHDEARKSMQMSLRWAQRSRDEFDRLENPNSLFGIIQGSVYEDLRDESLKGLLEIGYDGYAVGGLAVGEPKEDMHRILEHVCPQIPADKPRYLMGVGKPEDLVEGVRRGVDMFDCVMPTRNARNGHLFTSEGVIKIRNARHRDDTSPLDAKCDCYTCKNYSRAYLYHLDRCNEILGARLNTIHNLRYYQMLMEGLRGAIETGTLDAFVEEFYTSQGREVPKLSD</sequence>
<gene>
    <name evidence="1" type="primary">tgt</name>
    <name type="ordered locus">Shew_2337</name>
</gene>
<evidence type="ECO:0000255" key="1">
    <source>
        <dbReference type="HAMAP-Rule" id="MF_00168"/>
    </source>
</evidence>
<keyword id="KW-0328">Glycosyltransferase</keyword>
<keyword id="KW-0479">Metal-binding</keyword>
<keyword id="KW-0671">Queuosine biosynthesis</keyword>
<keyword id="KW-1185">Reference proteome</keyword>
<keyword id="KW-0808">Transferase</keyword>
<keyword id="KW-0819">tRNA processing</keyword>
<keyword id="KW-0862">Zinc</keyword>
<dbReference type="EC" id="2.4.2.29" evidence="1"/>
<dbReference type="EMBL" id="CP000606">
    <property type="protein sequence ID" value="ABO24203.1"/>
    <property type="molecule type" value="Genomic_DNA"/>
</dbReference>
<dbReference type="RefSeq" id="WP_011866134.1">
    <property type="nucleotide sequence ID" value="NC_009092.1"/>
</dbReference>
<dbReference type="SMR" id="A3QFF5"/>
<dbReference type="STRING" id="323850.Shew_2337"/>
<dbReference type="KEGG" id="slo:Shew_2337"/>
<dbReference type="eggNOG" id="COG0343">
    <property type="taxonomic scope" value="Bacteria"/>
</dbReference>
<dbReference type="HOGENOM" id="CLU_022060_0_1_6"/>
<dbReference type="OrthoDB" id="9805417at2"/>
<dbReference type="UniPathway" id="UPA00392"/>
<dbReference type="Proteomes" id="UP000001558">
    <property type="component" value="Chromosome"/>
</dbReference>
<dbReference type="GO" id="GO:0005829">
    <property type="term" value="C:cytosol"/>
    <property type="evidence" value="ECO:0007669"/>
    <property type="project" value="TreeGrafter"/>
</dbReference>
<dbReference type="GO" id="GO:0046872">
    <property type="term" value="F:metal ion binding"/>
    <property type="evidence" value="ECO:0007669"/>
    <property type="project" value="UniProtKB-KW"/>
</dbReference>
<dbReference type="GO" id="GO:0008479">
    <property type="term" value="F:tRNA-guanosine(34) queuine transglycosylase activity"/>
    <property type="evidence" value="ECO:0007669"/>
    <property type="project" value="UniProtKB-UniRule"/>
</dbReference>
<dbReference type="GO" id="GO:0008616">
    <property type="term" value="P:queuosine biosynthetic process"/>
    <property type="evidence" value="ECO:0007669"/>
    <property type="project" value="UniProtKB-UniRule"/>
</dbReference>
<dbReference type="GO" id="GO:0002099">
    <property type="term" value="P:tRNA wobble guanine modification"/>
    <property type="evidence" value="ECO:0007669"/>
    <property type="project" value="TreeGrafter"/>
</dbReference>
<dbReference type="GO" id="GO:0101030">
    <property type="term" value="P:tRNA-guanine transglycosylation"/>
    <property type="evidence" value="ECO:0007669"/>
    <property type="project" value="InterPro"/>
</dbReference>
<dbReference type="FunFam" id="3.20.20.105:FF:000001">
    <property type="entry name" value="Queuine tRNA-ribosyltransferase"/>
    <property type="match status" value="1"/>
</dbReference>
<dbReference type="Gene3D" id="3.20.20.105">
    <property type="entry name" value="Queuine tRNA-ribosyltransferase-like"/>
    <property type="match status" value="1"/>
</dbReference>
<dbReference type="HAMAP" id="MF_00168">
    <property type="entry name" value="Q_tRNA_Tgt"/>
    <property type="match status" value="1"/>
</dbReference>
<dbReference type="InterPro" id="IPR050076">
    <property type="entry name" value="ArchSynthase1/Queuine_TRR"/>
</dbReference>
<dbReference type="InterPro" id="IPR004803">
    <property type="entry name" value="TGT"/>
</dbReference>
<dbReference type="InterPro" id="IPR036511">
    <property type="entry name" value="TGT-like_sf"/>
</dbReference>
<dbReference type="InterPro" id="IPR002616">
    <property type="entry name" value="tRNA_ribo_trans-like"/>
</dbReference>
<dbReference type="NCBIfam" id="TIGR00430">
    <property type="entry name" value="Q_tRNA_tgt"/>
    <property type="match status" value="1"/>
</dbReference>
<dbReference type="NCBIfam" id="TIGR00449">
    <property type="entry name" value="tgt_general"/>
    <property type="match status" value="1"/>
</dbReference>
<dbReference type="PANTHER" id="PTHR46499">
    <property type="entry name" value="QUEUINE TRNA-RIBOSYLTRANSFERASE"/>
    <property type="match status" value="1"/>
</dbReference>
<dbReference type="PANTHER" id="PTHR46499:SF1">
    <property type="entry name" value="QUEUINE TRNA-RIBOSYLTRANSFERASE"/>
    <property type="match status" value="1"/>
</dbReference>
<dbReference type="Pfam" id="PF01702">
    <property type="entry name" value="TGT"/>
    <property type="match status" value="1"/>
</dbReference>
<dbReference type="SUPFAM" id="SSF51713">
    <property type="entry name" value="tRNA-guanine transglycosylase"/>
    <property type="match status" value="1"/>
</dbReference>
<feature type="chain" id="PRO_1000016848" description="Queuine tRNA-ribosyltransferase">
    <location>
        <begin position="1"/>
        <end position="374"/>
    </location>
</feature>
<feature type="region of interest" description="RNA binding" evidence="1">
    <location>
        <begin position="245"/>
        <end position="251"/>
    </location>
</feature>
<feature type="region of interest" description="RNA binding; important for wobble base 34 recognition" evidence="1">
    <location>
        <begin position="269"/>
        <end position="273"/>
    </location>
</feature>
<feature type="active site" description="Proton acceptor" evidence="1">
    <location>
        <position position="89"/>
    </location>
</feature>
<feature type="active site" description="Nucleophile" evidence="1">
    <location>
        <position position="264"/>
    </location>
</feature>
<feature type="binding site" evidence="1">
    <location>
        <begin position="89"/>
        <end position="93"/>
    </location>
    <ligand>
        <name>substrate</name>
    </ligand>
</feature>
<feature type="binding site" evidence="1">
    <location>
        <position position="143"/>
    </location>
    <ligand>
        <name>substrate</name>
    </ligand>
</feature>
<feature type="binding site" evidence="1">
    <location>
        <position position="187"/>
    </location>
    <ligand>
        <name>substrate</name>
    </ligand>
</feature>
<feature type="binding site" evidence="1">
    <location>
        <position position="214"/>
    </location>
    <ligand>
        <name>substrate</name>
    </ligand>
</feature>
<feature type="binding site" evidence="1">
    <location>
        <position position="302"/>
    </location>
    <ligand>
        <name>Zn(2+)</name>
        <dbReference type="ChEBI" id="CHEBI:29105"/>
    </ligand>
</feature>
<feature type="binding site" evidence="1">
    <location>
        <position position="304"/>
    </location>
    <ligand>
        <name>Zn(2+)</name>
        <dbReference type="ChEBI" id="CHEBI:29105"/>
    </ligand>
</feature>
<feature type="binding site" evidence="1">
    <location>
        <position position="307"/>
    </location>
    <ligand>
        <name>Zn(2+)</name>
        <dbReference type="ChEBI" id="CHEBI:29105"/>
    </ligand>
</feature>
<feature type="binding site" evidence="1">
    <location>
        <position position="333"/>
    </location>
    <ligand>
        <name>Zn(2+)</name>
        <dbReference type="ChEBI" id="CHEBI:29105"/>
    </ligand>
</feature>
<name>TGT_SHELP</name>